<protein>
    <recommendedName>
        <fullName evidence="9">Polyprotein pp62</fullName>
    </recommendedName>
    <alternativeName>
        <fullName>60 kDa polyprotein</fullName>
        <shortName>p60</shortName>
    </alternativeName>
    <alternativeName>
        <fullName>62 kDa polyprotein</fullName>
        <shortName>p62</shortName>
    </alternativeName>
    <component>
        <recommendedName>
            <fullName evidence="9">p15</fullName>
        </recommendedName>
    </component>
    <component>
        <recommendedName>
            <fullName evidence="9">p35</fullName>
        </recommendedName>
        <alternativeName>
            <fullName>PIG1</fullName>
        </alternativeName>
        <alternativeName>
            <fullName>UB18</fullName>
        </alternativeName>
    </component>
    <component>
        <recommendedName>
            <fullName evidence="9">p8</fullName>
        </recommendedName>
    </component>
</protein>
<name>PP62_ASFB7</name>
<gene>
    <name type="ordered locus">Ba71V-94</name>
    <name type="ORF">CP530R</name>
</gene>
<sequence>MPSNMKQFCKISVWLQQHDPDLLEIINNLCMLGNLSAAKYKHGVTFIYPKQAKIRDEIKKHAYSNDPSQAIKTLESLILPFYIPTPAEFTGEIGSYTGVKLEVEKTEANKVILKNGEAVLVPAADFKPFPDRRLAVWIMESGSMPLEGPPYKRKKEGGGNDPPVPKHISPYTPRTRIAIEVEKAFDDCMRQNWCSVNNPYLAKSVSLLSFLSLNHPTEFIKVLPLIDFDPLVTFYLLLEPYKTHGDDFLIPETILFGPTGWNGTDLYQSAMLEFKKFFTQITRQTFMDIADSATKEVDVPICYSDPETVHSYTNHVRTEILHHNAVNKVTTPNLVVQAYNELEQTNTIRHYGPIFPESTINALRFWKKLWQDEQRFVIHGLHRTLMDQPTYETSEFAEIVRNLRFSRPGNNYINELNITSPAMYGDKHTTGDIAPNDRFAMLVAFINSTDFLYTAIPEEKVGGNETQTSSLTDLVPTRLHSFLNHNLSKLKILNRAQQTVRNILSNDCLNQLKHYVKHTGKNEILKLLQE</sequence>
<proteinExistence type="evidence at protein level"/>
<evidence type="ECO:0000269" key="1">
    <source>
    </source>
</evidence>
<evidence type="ECO:0000269" key="2">
    <source>
    </source>
</evidence>
<evidence type="ECO:0000269" key="3">
    <source>
    </source>
</evidence>
<evidence type="ECO:0000269" key="4">
    <source>
    </source>
</evidence>
<evidence type="ECO:0000269" key="5">
    <source>
    </source>
</evidence>
<evidence type="ECO:0000269" key="6">
    <source>
    </source>
</evidence>
<evidence type="ECO:0000269" key="7">
    <source>
    </source>
</evidence>
<evidence type="ECO:0000269" key="8">
    <source>
    </source>
</evidence>
<evidence type="ECO:0000303" key="9">
    <source>
    </source>
</evidence>
<evidence type="ECO:0000305" key="10"/>
<evidence type="ECO:0000305" key="11">
    <source>
    </source>
</evidence>
<evidence type="ECO:0007744" key="12">
    <source>
        <dbReference type="PDB" id="7BQ9"/>
    </source>
</evidence>
<evidence type="ECO:0007744" key="13">
    <source>
        <dbReference type="PDB" id="7BQA"/>
    </source>
</evidence>
<evidence type="ECO:0007744" key="14">
    <source>
        <dbReference type="PDB" id="7CP2"/>
    </source>
</evidence>
<evidence type="ECO:0007829" key="15">
    <source>
        <dbReference type="PDB" id="6LNL"/>
    </source>
</evidence>
<evidence type="ECO:0007829" key="16">
    <source>
        <dbReference type="PDB" id="7BQ9"/>
    </source>
</evidence>
<evidence type="ECO:0007829" key="17">
    <source>
        <dbReference type="PDB" id="7BQA"/>
    </source>
</evidence>
<organism>
    <name type="scientific">African swine fever virus (strain Badajoz 1971 Vero-adapted)</name>
    <name type="common">Ba71V</name>
    <name type="synonym">ASFV</name>
    <dbReference type="NCBI Taxonomy" id="10498"/>
    <lineage>
        <taxon>Viruses</taxon>
        <taxon>Varidnaviria</taxon>
        <taxon>Bamfordvirae</taxon>
        <taxon>Nucleocytoviricota</taxon>
        <taxon>Pokkesviricetes</taxon>
        <taxon>Asfuvirales</taxon>
        <taxon>Asfarviridae</taxon>
        <taxon>Asfivirus</taxon>
        <taxon>African swine fever virus</taxon>
    </lineage>
</organism>
<comment type="function">
    <molecule>Polyprotein pp62</molecule>
    <text evidence="1">Essential for the correct assembly and maturation of the core of the virion.</text>
</comment>
<comment type="function">
    <molecule>p35</molecule>
    <text evidence="2 5">Component of the core shell (PubMed:30185597). Binds to phosphatidylserine, which may enable the core shell binding with the inner membrane (PubMed:32519301).</text>
</comment>
<comment type="function">
    <molecule>p15</molecule>
    <text evidence="2 4">Component of the core shell (PubMed:30185597). Binds to phosphatidylserine and DNA, which may link the core shell to the inner membrane and to the viral nucleoid (PubMed:32451720).</text>
</comment>
<comment type="function">
    <molecule>p8</molecule>
    <text evidence="2">Component of the core shell.</text>
</comment>
<comment type="subunit">
    <molecule>p35</molecule>
    <text evidence="5">Monomer (PubMed:32519301). Predominantly exists as a monomer, with very little dimers (PubMed:32519301). Homodimerization seems to be linked to low pH (PubMed:32519301).</text>
</comment>
<comment type="subunit">
    <molecule>p15</molecule>
    <text evidence="4 6">Homodimer; disulfide-linked (PubMed:32451720, PubMed:33629764). Homotrimer; disulfide-linked (PubMed:33629764). Homohexamer (PubMed:32451720).</text>
</comment>
<comment type="subcellular location">
    <molecule>Polyprotein pp62</molecule>
    <subcellularLocation>
        <location evidence="8">Host cytoplasm</location>
        <location evidence="8">Host perinuclear region</location>
    </subcellularLocation>
    <text evidence="8">Found in perinuclear cytoplasmic viral factories during assembly.</text>
</comment>
<comment type="subcellular location">
    <molecule>p35</molecule>
    <subcellularLocation>
        <location evidence="2 6">Virion</location>
    </subcellularLocation>
    <text evidence="6">Located in the core shell, which functions like a matrix between the DNA and the inner envelope.</text>
</comment>
<comment type="subcellular location">
    <molecule>p15</molecule>
    <subcellularLocation>
        <location evidence="2 6">Virion</location>
    </subcellularLocation>
    <text evidence="6">Located in the core shell, which functions like a matrix between the DNA and the inner envelope.</text>
</comment>
<comment type="subcellular location">
    <molecule>p8</molecule>
    <subcellularLocation>
        <location evidence="2">Virion</location>
    </subcellularLocation>
    <text evidence="9">Located in the core shell, which functions like a matrix between the DNA and the inner envelope.</text>
</comment>
<comment type="induction">
    <text evidence="3">Expressed in the late phase of the viral replicative cycle.</text>
</comment>
<comment type="PTM">
    <molecule>p15</molecule>
    <text evidence="7">Monoubiquitinated in vitro by viral UBCv1.</text>
</comment>
<comment type="PTM">
    <molecule>Polyprotein pp62</molecule>
    <text evidence="2 8">Specific enzymatic cleavages in vivo by the viral pS273R protease yield mature proteins.</text>
</comment>
<comment type="similarity">
    <text evidence="10">Belongs to the asfivirus polyprotein pp62 family.</text>
</comment>
<comment type="sequence caution" evidence="10">
    <conflict type="frameshift">
        <sequence resource="EMBL-CDS" id="AAB33353"/>
    </conflict>
</comment>
<keyword id="KW-0002">3D-structure</keyword>
<keyword id="KW-0903">Direct protein sequencing</keyword>
<keyword id="KW-1015">Disulfide bond</keyword>
<keyword id="KW-1035">Host cytoplasm</keyword>
<keyword id="KW-0426">Late protein</keyword>
<keyword id="KW-1185">Reference proteome</keyword>
<keyword id="KW-0832">Ubl conjugation</keyword>
<keyword id="KW-0946">Virion</keyword>
<organismHost>
    <name type="scientific">Ornithodoros</name>
    <name type="common">relapsing fever ticks</name>
    <dbReference type="NCBI Taxonomy" id="6937"/>
</organismHost>
<organismHost>
    <name type="scientific">Sus scrofa</name>
    <name type="common">Pig</name>
    <dbReference type="NCBI Taxonomy" id="9823"/>
</organismHost>
<feature type="initiator methionine" description="Removed" evidence="7">
    <location>
        <position position="1"/>
    </location>
</feature>
<feature type="chain" id="PRO_0000373445" description="Polyprotein pp62">
    <location>
        <begin position="2"/>
        <end position="530"/>
    </location>
</feature>
<feature type="chain" id="PRO_0000373446" description="p15">
    <location>
        <begin position="2"/>
        <end position="158"/>
    </location>
</feature>
<feature type="chain" id="PRO_0000373447" description="p35">
    <location>
        <begin position="159"/>
        <end position="463"/>
    </location>
</feature>
<feature type="chain" id="PRO_0000373448" description="p8">
    <location>
        <begin position="464"/>
        <end position="530"/>
    </location>
</feature>
<feature type="site" description="DNA-binding" evidence="6">
    <location>
        <position position="10"/>
    </location>
</feature>
<feature type="site" description="DNA-binding" evidence="6">
    <location>
        <position position="39"/>
    </location>
</feature>
<feature type="site" description="Cleavage; by viral protease S273R" evidence="11">
    <location>
        <begin position="158"/>
        <end position="159"/>
    </location>
</feature>
<feature type="site" description="Cleavage; by viral protease S273R" evidence="11">
    <location>
        <begin position="463"/>
        <end position="464"/>
    </location>
</feature>
<feature type="disulfide bond" description="Interchain (with C-30)" evidence="6">
    <location>
        <position position="9"/>
    </location>
</feature>
<feature type="disulfide bond" description="Interchain (with C-9)" evidence="6">
    <location>
        <position position="30"/>
    </location>
</feature>
<feature type="sequence variant" description="In strain: Isolate Uganda.">
    <original>Q</original>
    <variation>H</variation>
    <location>
        <position position="16"/>
    </location>
</feature>
<feature type="sequence variant" description="In strain: Isolate Uganda.">
    <original>A</original>
    <variation>M</variation>
    <location>
        <position position="87"/>
    </location>
</feature>
<feature type="sequence variant" description="In strain: Isolate Uganda.">
    <original>T</original>
    <variation>K</variation>
    <location>
        <position position="106"/>
    </location>
</feature>
<feature type="sequence variant" description="In strain: Isolate Uganda.">
    <original>V</original>
    <variation>I</variation>
    <location>
        <position position="121"/>
    </location>
</feature>
<feature type="sequence variant" description="In strain: Isolate Uganda.">
    <original>D</original>
    <variation>N</variation>
    <location>
        <position position="131"/>
    </location>
</feature>
<feature type="sequence variant" description="In strain: Isolate Uganda.">
    <original>A</original>
    <variation>T</variation>
    <location>
        <position position="135"/>
    </location>
</feature>
<feature type="sequence variant" description="In strain: Isolate Uganda.">
    <original>S</original>
    <variation>A</variation>
    <location>
        <position position="141"/>
    </location>
</feature>
<feature type="sequence variant" description="In strain: Isolate Uganda.">
    <original>P</original>
    <variation>S</variation>
    <location>
        <position position="165"/>
    </location>
</feature>
<feature type="mutagenesis site" description="Complete loss of DNA-binding." evidence="6">
    <original>K</original>
    <variation>A</variation>
    <location>
        <position position="10"/>
    </location>
</feature>
<feature type="mutagenesis site" description="Loss of DNA-binding." evidence="6">
    <original>K</original>
    <variation>A</variation>
    <location>
        <position position="39"/>
    </location>
</feature>
<feature type="strand" evidence="15">
    <location>
        <begin position="7"/>
        <end position="10"/>
    </location>
</feature>
<feature type="helix" evidence="15">
    <location>
        <begin position="11"/>
        <end position="18"/>
    </location>
</feature>
<feature type="helix" evidence="15">
    <location>
        <begin position="20"/>
        <end position="28"/>
    </location>
</feature>
<feature type="turn" evidence="15">
    <location>
        <begin position="32"/>
        <end position="35"/>
    </location>
</feature>
<feature type="strand" evidence="16">
    <location>
        <begin position="39"/>
        <end position="41"/>
    </location>
</feature>
<feature type="strand" evidence="15">
    <location>
        <begin position="44"/>
        <end position="49"/>
    </location>
</feature>
<feature type="helix" evidence="15">
    <location>
        <begin position="52"/>
        <end position="62"/>
    </location>
</feature>
<feature type="helix" evidence="15">
    <location>
        <begin position="68"/>
        <end position="77"/>
    </location>
</feature>
<feature type="strand" evidence="15">
    <location>
        <begin position="78"/>
        <end position="81"/>
    </location>
</feature>
<feature type="helix" evidence="15">
    <location>
        <begin position="86"/>
        <end position="88"/>
    </location>
</feature>
<feature type="strand" evidence="15">
    <location>
        <begin position="103"/>
        <end position="107"/>
    </location>
</feature>
<feature type="strand" evidence="15">
    <location>
        <begin position="110"/>
        <end position="113"/>
    </location>
</feature>
<feature type="turn" evidence="15">
    <location>
        <begin position="114"/>
        <end position="116"/>
    </location>
</feature>
<feature type="strand" evidence="15">
    <location>
        <begin position="119"/>
        <end position="122"/>
    </location>
</feature>
<feature type="strand" evidence="15">
    <location>
        <begin position="134"/>
        <end position="142"/>
    </location>
</feature>
<feature type="helix" evidence="17">
    <location>
        <begin position="173"/>
        <end position="192"/>
    </location>
</feature>
<feature type="strand" evidence="17">
    <location>
        <begin position="196"/>
        <end position="198"/>
    </location>
</feature>
<feature type="helix" evidence="17">
    <location>
        <begin position="199"/>
        <end position="214"/>
    </location>
</feature>
<feature type="helix" evidence="17">
    <location>
        <begin position="216"/>
        <end position="222"/>
    </location>
</feature>
<feature type="helix" evidence="17">
    <location>
        <begin position="223"/>
        <end position="225"/>
    </location>
</feature>
<feature type="helix" evidence="17">
    <location>
        <begin position="230"/>
        <end position="238"/>
    </location>
</feature>
<feature type="helix" evidence="17">
    <location>
        <begin position="252"/>
        <end position="256"/>
    </location>
</feature>
<feature type="helix" evidence="17">
    <location>
        <begin position="270"/>
        <end position="279"/>
    </location>
</feature>
<feature type="helix" evidence="17">
    <location>
        <begin position="283"/>
        <end position="286"/>
    </location>
</feature>
<feature type="helix" evidence="17">
    <location>
        <begin position="301"/>
        <end position="304"/>
    </location>
</feature>
<feature type="helix" evidence="17">
    <location>
        <begin position="306"/>
        <end position="322"/>
    </location>
</feature>
<feature type="turn" evidence="17">
    <location>
        <begin position="328"/>
        <end position="330"/>
    </location>
</feature>
<feature type="helix" evidence="17">
    <location>
        <begin position="331"/>
        <end position="345"/>
    </location>
</feature>
<feature type="helix" evidence="17">
    <location>
        <begin position="357"/>
        <end position="361"/>
    </location>
</feature>
<feature type="turn" evidence="17">
    <location>
        <begin position="362"/>
        <end position="366"/>
    </location>
</feature>
<feature type="helix" evidence="17">
    <location>
        <begin position="367"/>
        <end position="387"/>
    </location>
</feature>
<feature type="strand" evidence="17">
    <location>
        <begin position="388"/>
        <end position="390"/>
    </location>
</feature>
<feature type="helix" evidence="17">
    <location>
        <begin position="393"/>
        <end position="405"/>
    </location>
</feature>
<feature type="strand" evidence="17">
    <location>
        <begin position="407"/>
        <end position="410"/>
    </location>
</feature>
<feature type="helix" evidence="17">
    <location>
        <begin position="412"/>
        <end position="415"/>
    </location>
</feature>
<feature type="helix" evidence="17">
    <location>
        <begin position="421"/>
        <end position="423"/>
    </location>
</feature>
<feature type="helix" evidence="17">
    <location>
        <begin position="435"/>
        <end position="446"/>
    </location>
</feature>
<feature type="turn" evidence="17">
    <location>
        <begin position="449"/>
        <end position="452"/>
    </location>
</feature>
<dbReference type="EMBL" id="U18466">
    <property type="protein sequence ID" value="AAA65323.1"/>
    <property type="molecule type" value="Genomic_DNA"/>
</dbReference>
<dbReference type="EMBL" id="S75219">
    <property type="protein sequence ID" value="AAB33353.1"/>
    <property type="status" value="ALT_FRAME"/>
    <property type="molecule type" value="mRNA"/>
</dbReference>
<dbReference type="EMBL" id="M96354">
    <property type="status" value="NOT_ANNOTATED_CDS"/>
    <property type="molecule type" value="Genomic_DNA"/>
</dbReference>
<dbReference type="RefSeq" id="NP_042787.1">
    <property type="nucleotide sequence ID" value="NC_001659.2"/>
</dbReference>
<dbReference type="PDB" id="6LNL">
    <property type="method" value="X-ray"/>
    <property type="resolution" value="1.93 A"/>
    <property type="chains" value="A/B/C=1-160"/>
</dbReference>
<dbReference type="PDB" id="6NLN">
    <property type="method" value="X-ray"/>
    <property type="resolution" value="1.93 A"/>
    <property type="chains" value="A/B/C=2-160"/>
</dbReference>
<dbReference type="PDB" id="7BQ9">
    <property type="method" value="X-ray"/>
    <property type="resolution" value="2.61 A"/>
    <property type="chains" value="A/B=2-160"/>
</dbReference>
<dbReference type="PDB" id="7BQA">
    <property type="method" value="X-ray"/>
    <property type="resolution" value="2.10 A"/>
    <property type="chains" value="A/B=161-464"/>
</dbReference>
<dbReference type="PDB" id="7CP2">
    <property type="method" value="X-ray"/>
    <property type="resolution" value="2.19 A"/>
    <property type="chains" value="A/B/C=2-153"/>
</dbReference>
<dbReference type="PDBsum" id="6LNL"/>
<dbReference type="PDBsum" id="6NLN"/>
<dbReference type="PDBsum" id="7BQ9"/>
<dbReference type="PDBsum" id="7BQA"/>
<dbReference type="PDBsum" id="7CP2"/>
<dbReference type="SMR" id="Q65179"/>
<dbReference type="GeneID" id="22220323"/>
<dbReference type="KEGG" id="vg:22220323"/>
<dbReference type="Proteomes" id="UP000000624">
    <property type="component" value="Segment"/>
</dbReference>
<dbReference type="GO" id="GO:0044220">
    <property type="term" value="C:host cell perinuclear region of cytoplasm"/>
    <property type="evidence" value="ECO:0007669"/>
    <property type="project" value="UniProtKB-SubCell"/>
</dbReference>
<dbReference type="GO" id="GO:0044423">
    <property type="term" value="C:virion component"/>
    <property type="evidence" value="ECO:0007669"/>
    <property type="project" value="UniProtKB-KW"/>
</dbReference>
<dbReference type="GO" id="GO:0019069">
    <property type="term" value="P:viral capsid assembly"/>
    <property type="evidence" value="ECO:0000314"/>
    <property type="project" value="CACAO"/>
</dbReference>
<accession>Q65179</accession>
<accession>Q86851</accession>
<reference key="1">
    <citation type="journal article" date="1995" name="Virology">
        <title>Analysis of the complete nucleotide sequence of African swine fever virus.</title>
        <authorList>
            <person name="Yanez R.J."/>
            <person name="Rodriguez J.M."/>
            <person name="Nogal M.L."/>
            <person name="Yuste L."/>
            <person name="Enriquez C."/>
            <person name="Rodriguez J.F."/>
            <person name="Vinuela E."/>
        </authorList>
    </citation>
    <scope>NUCLEOTIDE SEQUENCE [LARGE SCALE GENOMIC DNA]</scope>
</reference>
<reference key="2">
    <citation type="journal article" date="1995" name="J. Virol.">
        <title>Characterization of a ubiquitinated protein which is externally located in African swine fever virions.</title>
        <authorList>
            <person name="Hingamp P.M."/>
            <person name="Leyland M.L."/>
            <person name="Webb J."/>
            <person name="Twigger S."/>
            <person name="Mayer R.J."/>
            <person name="Dixon L.K."/>
        </authorList>
    </citation>
    <scope>NUCLEOTIDE SEQUENCE [MRNA] OF 1-277</scope>
    <scope>PROTEIN SEQUENCE OF 2-8</scope>
    <scope>UBIQUITINATION (P15)</scope>
    <source>
        <strain>BA71V</strain>
        <strain>Isolate Uganda</strain>
    </source>
</reference>
<reference key="3">
    <citation type="journal article" date="1993" name="J. Virol.">
        <title>Sequence and characterization of the major early phosphoprotein p32 of African swine fever virus.</title>
        <authorList>
            <person name="Prados F.J."/>
            <person name="Vinuela E."/>
            <person name="Alcami A."/>
        </authorList>
    </citation>
    <scope>NUCLEOTIDE SEQUENCE [GENOMIC DNA] OF 1-36</scope>
</reference>
<reference key="4">
    <citation type="journal article" date="1997" name="J. Virol.">
        <title>Proteolytic processing in African swine fever virus: evidence for a new structural polyprotein, pp62.</title>
        <authorList>
            <person name="Simon-Mateo C."/>
            <person name="Andres G."/>
            <person name="Almazan F."/>
            <person name="Vinuela E."/>
        </authorList>
    </citation>
    <scope>PROTEOLYTIC PROCESSING OF POLYPROTEIN (POLYPROTEIN PP62)</scope>
    <scope>SUBCELLULAR LOCATION (POLYPROTEIN PP62)</scope>
</reference>
<reference key="5">
    <citation type="journal article" date="2002" name="J. Virol.">
        <title>African swine fever virus polyproteins pp220 and pp62 assemble into the core shell.</title>
        <authorList>
            <person name="Andres G."/>
            <person name="Alejo A."/>
            <person name="Salas J."/>
            <person name="Salas M.L."/>
        </authorList>
    </citation>
    <scope>SUBCELLULAR LOCATION (P35)</scope>
    <scope>SUBCELLULAR LOCATION (P15)</scope>
</reference>
<reference key="6">
    <citation type="journal article" date="2010" name="J. Virol.">
        <title>African swine fever virus polyprotein pp62 is essential for viral core development.</title>
        <authorList>
            <person name="Suarez C."/>
            <person name="Salas M.L."/>
            <person name="Rodriguez J.M."/>
        </authorList>
    </citation>
    <scope>FUNCTION</scope>
</reference>
<reference key="7">
    <citation type="journal article" date="2018" name="J. Virol.">
        <title>A Proteomic Atlas of the African Swine Fever Virus Particle.</title>
        <authorList>
            <person name="Alejo A."/>
            <person name="Matamoros T."/>
            <person name="Guerra M."/>
            <person name="Andres G."/>
        </authorList>
    </citation>
    <scope>SUBCELLULAR LOCATION (P35)</scope>
    <scope>SUBCELLULAR LOCATION (P15)</scope>
    <scope>SUBCELLULAR LOCATION (P8)</scope>
    <scope>PROTEOLYTIC CLEAVAGE (POLYPROTEIN PP62)</scope>
    <scope>FUNCTION (P35)</scope>
    <scope>FUNCTION (P15)</scope>
    <scope>FUNCTION (P8)</scope>
</reference>
<reference key="8">
    <citation type="journal article" date="2020" name="J. Virol.">
        <title>The African Swine Fever Virus Transcriptome.</title>
        <authorList>
            <person name="Cackett G."/>
            <person name="Matelska D."/>
            <person name="Sykora M."/>
            <person name="Portugal R."/>
            <person name="Malecki M."/>
            <person name="Baehler J."/>
            <person name="Dixon L."/>
            <person name="Werner F."/>
        </authorList>
    </citation>
    <scope>INDUCTION</scope>
</reference>
<reference evidence="13" key="9">
    <citation type="journal article" date="2020" name="Protein Cell">
        <title>Crystal structure of the African swine fever virus structural protein p35 reveals its role for core shell assembly.</title>
        <authorList>
            <person name="Li G."/>
            <person name="Fu D."/>
            <person name="Zhang G."/>
            <person name="Zhao D."/>
            <person name="Li M."/>
            <person name="Geng X."/>
            <person name="Sun D."/>
            <person name="Wang Y."/>
            <person name="Chen C."/>
            <person name="Jiao P."/>
            <person name="Cao L."/>
            <person name="Guo Y."/>
            <person name="Rao Z."/>
        </authorList>
    </citation>
    <scope>X-RAY CRYSTALLOGRAPHY (2.10 ANGSTROMS) OF 161-464</scope>
    <scope>SUBUNIT (P35)</scope>
    <scope>FUNCTION (P35)</scope>
</reference>
<reference evidence="12" key="10">
    <citation type="journal article" date="2020" name="Protein Cell">
        <title>Structure of African swine fever virus p15 reveals its dual role for membrane-association and DNA binding.</title>
        <authorList>
            <person name="Fu D."/>
            <person name="Zhao D."/>
            <person name="Zhang W."/>
            <person name="Zhang G."/>
            <person name="Li M."/>
            <person name="Zhang Z."/>
            <person name="Wang Y."/>
            <person name="Sun D."/>
            <person name="Jiao P."/>
            <person name="Chen C."/>
            <person name="Guo Y."/>
            <person name="Rao Z."/>
        </authorList>
    </citation>
    <scope>X-RAY CRYSTALLOGRAPHY (2.61 ANGSTROMS) OF 2-160</scope>
    <scope>SUBUNIT (P15)</scope>
    <scope>FUNCTION (P15)</scope>
</reference>
<reference evidence="14" key="11">
    <citation type="submission" date="2020-08" db="PDB data bank">
        <title>Crystal structure of the African swine fever virus core shell protein p15.</title>
        <authorList>
            <person name="Liu K.F."/>
            <person name="Meng Y.M."/>
            <person name="Chai Y."/>
            <person name="Li L.J."/>
            <person name="Sun H."/>
            <person name="Gao G.F."/>
            <person name="Tan S.G."/>
            <person name="Qi J.X."/>
        </authorList>
    </citation>
    <scope>X-RAY CRYSTALLOGRAPHY (2.19 ANGSTROMS) OF 2-153</scope>
</reference>